<protein>
    <recommendedName>
        <fullName>Galactose-1-phosphate uridylyltransferase</fullName>
        <shortName>Gal-1-P uridylyltransferase</shortName>
        <ecNumber evidence="2">2.7.7.12</ecNumber>
    </recommendedName>
    <alternativeName>
        <fullName>UDP-glucose--hexose-1-phosphate uridylyltransferase</fullName>
    </alternativeName>
</protein>
<accession>P08431</accession>
<accession>D6VQ20</accession>
<accession>P04398</accession>
<sequence length="366" mass="42385">MTAEEFDFSSHSHRRYNPLTDSWILVSPHRAKRPWLGQQEAAYKPTAPLYDPKCYLCPGNKRATGNLNPRYESTYIFPNDYAAVRLDQPILPQNDSNEDNLKNRLLKVQSVRGNCFVICFSPNHNLTIPQMKQSDLVHIVNSWQALTDDLSREARENHKPFKYVQIFENKGTAMGCSNLHPHGQAWCLESIPSEVSQELKSFDKYKREHNTDLFADYVKLESREKSRVVVENESFIVVVPYWAIWPFETLVISKKKLASISQFNQMVKEDLASILKQLTIKYDNLFETSFPYSMGIHQAPLNATGDELSNSWFHMHFYPPLLRSATVRKFLVGFELLGEPQRDLTSEQAAEKLRNLDGQIHYLQRL</sequence>
<proteinExistence type="evidence at protein level"/>
<comment type="catalytic activity">
    <reaction evidence="2">
        <text>alpha-D-galactose 1-phosphate + UDP-alpha-D-glucose = alpha-D-glucose 1-phosphate + UDP-alpha-D-galactose</text>
        <dbReference type="Rhea" id="RHEA:13989"/>
        <dbReference type="ChEBI" id="CHEBI:58336"/>
        <dbReference type="ChEBI" id="CHEBI:58601"/>
        <dbReference type="ChEBI" id="CHEBI:58885"/>
        <dbReference type="ChEBI" id="CHEBI:66914"/>
        <dbReference type="EC" id="2.7.7.12"/>
    </reaction>
</comment>
<comment type="cofactor">
    <cofactor evidence="2">
        <name>Zn(2+)</name>
        <dbReference type="ChEBI" id="CHEBI:29105"/>
    </cofactor>
    <text evidence="2">Binds 1 zinc ion per subunit. Zinc binding seems to play a structural role.</text>
</comment>
<comment type="pathway">
    <text>Carbohydrate metabolism; galactose metabolism.</text>
</comment>
<comment type="subunit">
    <text evidence="1">Homodimer.</text>
</comment>
<comment type="similarity">
    <text evidence="5">Belongs to the galactose-1-phosphate uridylyltransferase type 1 family.</text>
</comment>
<feature type="initiator methionine" description="Removed" evidence="4">
    <location>
        <position position="1"/>
    </location>
</feature>
<feature type="chain" id="PRO_0000169893" description="Galactose-1-phosphate uridylyltransferase">
    <location>
        <begin position="2"/>
        <end position="366"/>
    </location>
</feature>
<feature type="active site" description="Tele-UMP-histidine intermediate" evidence="3">
    <location>
        <position position="182"/>
    </location>
</feature>
<feature type="binding site" evidence="3">
    <location>
        <position position="54"/>
    </location>
    <ligand>
        <name>Zn(2+)</name>
        <dbReference type="ChEBI" id="CHEBI:29105"/>
    </ligand>
</feature>
<feature type="binding site" evidence="3">
    <location>
        <position position="57"/>
    </location>
    <ligand>
        <name>Zn(2+)</name>
        <dbReference type="ChEBI" id="CHEBI:29105"/>
    </ligand>
</feature>
<feature type="binding site" description="in other chain" evidence="1">
    <location>
        <position position="63"/>
    </location>
    <ligand>
        <name>UDP-alpha-D-glucose</name>
        <dbReference type="ChEBI" id="CHEBI:58885"/>
        <note>ligand shared between dimeric partners</note>
    </ligand>
</feature>
<feature type="binding site" description="in other chain" evidence="1">
    <location>
        <begin position="79"/>
        <end position="80"/>
    </location>
    <ligand>
        <name>UDP-alpha-D-glucose</name>
        <dbReference type="ChEBI" id="CHEBI:58885"/>
        <note>ligand shared between dimeric partners</note>
    </ligand>
</feature>
<feature type="binding site" evidence="3">
    <location>
        <position position="124"/>
    </location>
    <ligand>
        <name>Zn(2+)</name>
        <dbReference type="ChEBI" id="CHEBI:29105"/>
    </ligand>
</feature>
<feature type="binding site" evidence="1">
    <location>
        <position position="169"/>
    </location>
    <ligand>
        <name>UDP-alpha-D-glucose</name>
        <dbReference type="ChEBI" id="CHEBI:58885"/>
        <note>ligand shared between dimeric partners</note>
    </ligand>
</feature>
<feature type="binding site" evidence="3">
    <location>
        <position position="180"/>
    </location>
    <ligand>
        <name>Zn(2+)</name>
        <dbReference type="ChEBI" id="CHEBI:29105"/>
    </ligand>
</feature>
<feature type="binding site" description="in other chain" evidence="1">
    <location>
        <position position="184"/>
    </location>
    <ligand>
        <name>UDP-alpha-D-glucose</name>
        <dbReference type="ChEBI" id="CHEBI:58885"/>
        <note>ligand shared between dimeric partners</note>
    </ligand>
</feature>
<feature type="binding site" evidence="2">
    <location>
        <position position="198"/>
    </location>
    <ligand>
        <name>Fe cation</name>
        <dbReference type="ChEBI" id="CHEBI:24875"/>
    </ligand>
</feature>
<feature type="binding site" evidence="2">
    <location>
        <position position="297"/>
    </location>
    <ligand>
        <name>Fe cation</name>
        <dbReference type="ChEBI" id="CHEBI:24875"/>
    </ligand>
</feature>
<feature type="binding site" evidence="2">
    <location>
        <position position="314"/>
    </location>
    <ligand>
        <name>Fe cation</name>
        <dbReference type="ChEBI" id="CHEBI:24875"/>
    </ligand>
</feature>
<feature type="binding site" evidence="2">
    <location>
        <position position="316"/>
    </location>
    <ligand>
        <name>Fe cation</name>
        <dbReference type="ChEBI" id="CHEBI:24875"/>
    </ligand>
</feature>
<feature type="binding site" description="in other chain" evidence="1">
    <location>
        <begin position="329"/>
        <end position="332"/>
    </location>
    <ligand>
        <name>UDP-alpha-D-glucose</name>
        <dbReference type="ChEBI" id="CHEBI:58885"/>
        <note>ligand shared between dimeric partners</note>
    </ligand>
</feature>
<feature type="binding site" description="in other chain" evidence="1">
    <location>
        <begin position="334"/>
        <end position="335"/>
    </location>
    <ligand>
        <name>UDP-alpha-D-glucose</name>
        <dbReference type="ChEBI" id="CHEBI:58885"/>
        <note>ligand shared between dimeric partners</note>
    </ligand>
</feature>
<feature type="modified residue" description="Phosphoserine" evidence="6">
    <location>
        <position position="27"/>
    </location>
</feature>
<feature type="sequence conflict" description="In Ref. 5; AAA34628." evidence="5" ref="5">
    <original>H</original>
    <variation>Y</variation>
    <location>
        <position position="11"/>
    </location>
</feature>
<feature type="sequence conflict" description="In Ref. 5; AAA34628." evidence="5" ref="5">
    <original>P</original>
    <variation>H</variation>
    <location>
        <position position="58"/>
    </location>
</feature>
<feature type="sequence conflict" description="In Ref. 1; AAA34627." evidence="5" ref="1">
    <original>RL</original>
    <variation>S</variation>
    <location>
        <begin position="85"/>
        <end position="86"/>
    </location>
</feature>
<feature type="sequence conflict" description="In Ref. 1; AAA34627." evidence="5" ref="1">
    <original>V</original>
    <variation>A</variation>
    <location>
        <position position="267"/>
    </location>
</feature>
<feature type="sequence conflict" description="In Ref. 1; AAA34627." evidence="5" ref="1">
    <original>T</original>
    <variation>I</variation>
    <location>
        <position position="345"/>
    </location>
</feature>
<dbReference type="EC" id="2.7.7.12" evidence="2"/>
<dbReference type="EMBL" id="X81324">
    <property type="protein sequence ID" value="CAA57105.1"/>
    <property type="molecule type" value="Genomic_DNA"/>
</dbReference>
<dbReference type="EMBL" id="M12348">
    <property type="protein sequence ID" value="AAA34627.1"/>
    <property type="molecule type" value="Genomic_DNA"/>
</dbReference>
<dbReference type="EMBL" id="X00215">
    <property type="protein sequence ID" value="CAA25039.1"/>
    <property type="molecule type" value="Genomic_DNA"/>
</dbReference>
<dbReference type="EMBL" id="Z35887">
    <property type="protein sequence ID" value="CAA84960.1"/>
    <property type="molecule type" value="Genomic_DNA"/>
</dbReference>
<dbReference type="EMBL" id="AH001375">
    <property type="protein sequence ID" value="AAA34628.1"/>
    <property type="molecule type" value="Genomic_DNA"/>
</dbReference>
<dbReference type="EMBL" id="BK006936">
    <property type="protein sequence ID" value="DAA07140.1"/>
    <property type="molecule type" value="Genomic_DNA"/>
</dbReference>
<dbReference type="PIR" id="S45873">
    <property type="entry name" value="XNBYUG"/>
</dbReference>
<dbReference type="RefSeq" id="NP_009574.1">
    <property type="nucleotide sequence ID" value="NM_001178366.1"/>
</dbReference>
<dbReference type="SMR" id="P08431"/>
<dbReference type="BioGRID" id="32721">
    <property type="interactions" value="137"/>
</dbReference>
<dbReference type="DIP" id="DIP-5357N"/>
<dbReference type="FunCoup" id="P08431">
    <property type="interactions" value="489"/>
</dbReference>
<dbReference type="IntAct" id="P08431">
    <property type="interactions" value="22"/>
</dbReference>
<dbReference type="MINT" id="P08431"/>
<dbReference type="STRING" id="4932.YBR018C"/>
<dbReference type="iPTMnet" id="P08431"/>
<dbReference type="PaxDb" id="4932-YBR018C"/>
<dbReference type="PeptideAtlas" id="P08431"/>
<dbReference type="EnsemblFungi" id="YBR018C_mRNA">
    <property type="protein sequence ID" value="YBR018C"/>
    <property type="gene ID" value="YBR018C"/>
</dbReference>
<dbReference type="GeneID" id="852306"/>
<dbReference type="KEGG" id="sce:YBR018C"/>
<dbReference type="AGR" id="SGD:S000000222"/>
<dbReference type="SGD" id="S000000222">
    <property type="gene designation" value="GAL7"/>
</dbReference>
<dbReference type="VEuPathDB" id="FungiDB:YBR018C"/>
<dbReference type="eggNOG" id="KOG2958">
    <property type="taxonomic scope" value="Eukaryota"/>
</dbReference>
<dbReference type="GeneTree" id="ENSGT00390000016188"/>
<dbReference type="HOGENOM" id="CLU_029960_0_0_1"/>
<dbReference type="InParanoid" id="P08431"/>
<dbReference type="OMA" id="CFENRGA"/>
<dbReference type="OrthoDB" id="418412at2759"/>
<dbReference type="BioCyc" id="YEAST:YBR018C-MONOMER"/>
<dbReference type="UniPathway" id="UPA00214"/>
<dbReference type="BioGRID-ORCS" id="852306">
    <property type="hits" value="7 hits in 10 CRISPR screens"/>
</dbReference>
<dbReference type="PRO" id="PR:P08431"/>
<dbReference type="Proteomes" id="UP000002311">
    <property type="component" value="Chromosome II"/>
</dbReference>
<dbReference type="RNAct" id="P08431">
    <property type="molecule type" value="protein"/>
</dbReference>
<dbReference type="GO" id="GO:0005737">
    <property type="term" value="C:cytoplasm"/>
    <property type="evidence" value="ECO:0000314"/>
    <property type="project" value="SGD"/>
</dbReference>
<dbReference type="GO" id="GO:0008108">
    <property type="term" value="F:UDP-glucose:hexose-1-phosphate uridylyltransferase activity"/>
    <property type="evidence" value="ECO:0000314"/>
    <property type="project" value="SGD"/>
</dbReference>
<dbReference type="GO" id="GO:0008270">
    <property type="term" value="F:zinc ion binding"/>
    <property type="evidence" value="ECO:0007669"/>
    <property type="project" value="InterPro"/>
</dbReference>
<dbReference type="GO" id="GO:0033499">
    <property type="term" value="P:galactose catabolic process via UDP-galactose, Leloir pathway"/>
    <property type="evidence" value="ECO:0000314"/>
    <property type="project" value="SGD"/>
</dbReference>
<dbReference type="CDD" id="cd00608">
    <property type="entry name" value="GalT"/>
    <property type="match status" value="1"/>
</dbReference>
<dbReference type="FunFam" id="3.30.428.10:FF:000001">
    <property type="entry name" value="Galactose-1-phosphate uridylyltransferase"/>
    <property type="match status" value="1"/>
</dbReference>
<dbReference type="FunFam" id="3.30.428.10:FF:000009">
    <property type="entry name" value="Galactose-1-phosphate uridylyltransferase"/>
    <property type="match status" value="1"/>
</dbReference>
<dbReference type="Gene3D" id="3.30.428.10">
    <property type="entry name" value="HIT-like"/>
    <property type="match status" value="2"/>
</dbReference>
<dbReference type="InterPro" id="IPR001937">
    <property type="entry name" value="GalP_UDPtransf1"/>
</dbReference>
<dbReference type="InterPro" id="IPR019779">
    <property type="entry name" value="GalP_UDPtransf1_His-AS"/>
</dbReference>
<dbReference type="InterPro" id="IPR005850">
    <property type="entry name" value="GalP_Utransf_C"/>
</dbReference>
<dbReference type="InterPro" id="IPR005849">
    <property type="entry name" value="GalP_Utransf_N"/>
</dbReference>
<dbReference type="InterPro" id="IPR036265">
    <property type="entry name" value="HIT-like_sf"/>
</dbReference>
<dbReference type="NCBIfam" id="TIGR00209">
    <property type="entry name" value="galT_1"/>
    <property type="match status" value="1"/>
</dbReference>
<dbReference type="NCBIfam" id="NF008724">
    <property type="entry name" value="PRK11720.1"/>
    <property type="match status" value="1"/>
</dbReference>
<dbReference type="PANTHER" id="PTHR11943">
    <property type="entry name" value="GALACTOSE-1-PHOSPHATE URIDYLYLTRANSFERASE"/>
    <property type="match status" value="1"/>
</dbReference>
<dbReference type="PANTHER" id="PTHR11943:SF1">
    <property type="entry name" value="GALACTOSE-1-PHOSPHATE URIDYLYLTRANSFERASE"/>
    <property type="match status" value="1"/>
</dbReference>
<dbReference type="Pfam" id="PF02744">
    <property type="entry name" value="GalP_UDP_tr_C"/>
    <property type="match status" value="1"/>
</dbReference>
<dbReference type="Pfam" id="PF01087">
    <property type="entry name" value="GalP_UDP_transf"/>
    <property type="match status" value="1"/>
</dbReference>
<dbReference type="PIRSF" id="PIRSF000808">
    <property type="entry name" value="GalT"/>
    <property type="match status" value="1"/>
</dbReference>
<dbReference type="SUPFAM" id="SSF54197">
    <property type="entry name" value="HIT-like"/>
    <property type="match status" value="2"/>
</dbReference>
<dbReference type="PROSITE" id="PS00117">
    <property type="entry name" value="GAL_P_UDP_TRANSF_I"/>
    <property type="match status" value="1"/>
</dbReference>
<keyword id="KW-0119">Carbohydrate metabolism</keyword>
<keyword id="KW-0903">Direct protein sequencing</keyword>
<keyword id="KW-0299">Galactose metabolism</keyword>
<keyword id="KW-0408">Iron</keyword>
<keyword id="KW-0479">Metal-binding</keyword>
<keyword id="KW-0548">Nucleotidyltransferase</keyword>
<keyword id="KW-0597">Phosphoprotein</keyword>
<keyword id="KW-1185">Reference proteome</keyword>
<keyword id="KW-0808">Transferase</keyword>
<keyword id="KW-0862">Zinc</keyword>
<evidence type="ECO:0000250" key="1">
    <source>
        <dbReference type="UniProtKB" id="P07902"/>
    </source>
</evidence>
<evidence type="ECO:0000250" key="2">
    <source>
        <dbReference type="UniProtKB" id="P09148"/>
    </source>
</evidence>
<evidence type="ECO:0000255" key="3">
    <source>
        <dbReference type="PROSITE-ProRule" id="PRU10033"/>
    </source>
</evidence>
<evidence type="ECO:0000269" key="4">
    <source>
    </source>
</evidence>
<evidence type="ECO:0000305" key="5"/>
<evidence type="ECO:0007744" key="6">
    <source>
    </source>
</evidence>
<gene>
    <name type="primary">GAL7</name>
    <name type="ordered locus">YBR018C</name>
    <name type="ORF">YBR0226</name>
</gene>
<reference key="1">
    <citation type="journal article" date="1985" name="Yeast">
        <title>Primary structure of the Saccharomyces cerevisiae GAL7 gene.</title>
        <authorList>
            <person name="Tajima M."/>
            <person name="Nogi Y."/>
            <person name="Fukasawa T."/>
        </authorList>
    </citation>
    <scope>NUCLEOTIDE SEQUENCE [GENOMIC DNA]</scope>
</reference>
<reference key="2">
    <citation type="journal article" date="1995" name="Yeast">
        <title>Sequence and functional analysis of a 7.2 kb fragment of Saccharomyces cerevisiae chromosome II including GAL7 and GAL10 and a new essential open reading frame.</title>
        <authorList>
            <person name="Schaaff-Gerstenschlaeger I."/>
            <person name="Schindwolf T."/>
            <person name="Lehnert W."/>
            <person name="Rose M."/>
            <person name="Zimmermann F.K."/>
        </authorList>
    </citation>
    <scope>NUCLEOTIDE SEQUENCE [GENOMIC DNA]</scope>
    <source>
        <strain>ATCC 204508 / S288c</strain>
    </source>
</reference>
<reference key="3">
    <citation type="journal article" date="1994" name="EMBO J.">
        <title>Complete DNA sequence of yeast chromosome II.</title>
        <authorList>
            <person name="Feldmann H."/>
            <person name="Aigle M."/>
            <person name="Aljinovic G."/>
            <person name="Andre B."/>
            <person name="Baclet M.C."/>
            <person name="Barthe C."/>
            <person name="Baur A."/>
            <person name="Becam A.-M."/>
            <person name="Biteau N."/>
            <person name="Boles E."/>
            <person name="Brandt T."/>
            <person name="Brendel M."/>
            <person name="Brueckner M."/>
            <person name="Bussereau F."/>
            <person name="Christiansen C."/>
            <person name="Contreras R."/>
            <person name="Crouzet M."/>
            <person name="Cziepluch C."/>
            <person name="Demolis N."/>
            <person name="Delaveau T."/>
            <person name="Doignon F."/>
            <person name="Domdey H."/>
            <person name="Duesterhus S."/>
            <person name="Dubois E."/>
            <person name="Dujon B."/>
            <person name="El Bakkoury M."/>
            <person name="Entian K.-D."/>
            <person name="Feuermann M."/>
            <person name="Fiers W."/>
            <person name="Fobo G.M."/>
            <person name="Fritz C."/>
            <person name="Gassenhuber J."/>
            <person name="Glansdorff N."/>
            <person name="Goffeau A."/>
            <person name="Grivell L.A."/>
            <person name="de Haan M."/>
            <person name="Hein C."/>
            <person name="Herbert C.J."/>
            <person name="Hollenberg C.P."/>
            <person name="Holmstroem K."/>
            <person name="Jacq C."/>
            <person name="Jacquet M."/>
            <person name="Jauniaux J.-C."/>
            <person name="Jonniaux J.-L."/>
            <person name="Kallesoee T."/>
            <person name="Kiesau P."/>
            <person name="Kirchrath L."/>
            <person name="Koetter P."/>
            <person name="Korol S."/>
            <person name="Liebl S."/>
            <person name="Logghe M."/>
            <person name="Lohan A.J.E."/>
            <person name="Louis E.J."/>
            <person name="Li Z.Y."/>
            <person name="Maat M.J."/>
            <person name="Mallet L."/>
            <person name="Mannhaupt G."/>
            <person name="Messenguy F."/>
            <person name="Miosga T."/>
            <person name="Molemans F."/>
            <person name="Mueller S."/>
            <person name="Nasr F."/>
            <person name="Obermaier B."/>
            <person name="Perea J."/>
            <person name="Pierard A."/>
            <person name="Piravandi E."/>
            <person name="Pohl F.M."/>
            <person name="Pohl T.M."/>
            <person name="Potier S."/>
            <person name="Proft M."/>
            <person name="Purnelle B."/>
            <person name="Ramezani Rad M."/>
            <person name="Rieger M."/>
            <person name="Rose M."/>
            <person name="Schaaff-Gerstenschlaeger I."/>
            <person name="Scherens B."/>
            <person name="Schwarzlose C."/>
            <person name="Skala J."/>
            <person name="Slonimski P.P."/>
            <person name="Smits P.H.M."/>
            <person name="Souciet J.-L."/>
            <person name="Steensma H.Y."/>
            <person name="Stucka R."/>
            <person name="Urrestarazu L.A."/>
            <person name="van der Aart Q.J.M."/>
            <person name="Van Dyck L."/>
            <person name="Vassarotti A."/>
            <person name="Vetter I."/>
            <person name="Vierendeels F."/>
            <person name="Vissers S."/>
            <person name="Wagner G."/>
            <person name="de Wergifosse P."/>
            <person name="Wolfe K.H."/>
            <person name="Zagulski M."/>
            <person name="Zimmermann F.K."/>
            <person name="Mewes H.-W."/>
            <person name="Kleine K."/>
        </authorList>
    </citation>
    <scope>NUCLEOTIDE SEQUENCE [LARGE SCALE GENOMIC DNA]</scope>
    <source>
        <strain>ATCC 204508 / S288c</strain>
    </source>
</reference>
<reference key="4">
    <citation type="journal article" date="2014" name="G3 (Bethesda)">
        <title>The reference genome sequence of Saccharomyces cerevisiae: Then and now.</title>
        <authorList>
            <person name="Engel S.R."/>
            <person name="Dietrich F.S."/>
            <person name="Fisk D.G."/>
            <person name="Binkley G."/>
            <person name="Balakrishnan R."/>
            <person name="Costanzo M.C."/>
            <person name="Dwight S.S."/>
            <person name="Hitz B.C."/>
            <person name="Karra K."/>
            <person name="Nash R.S."/>
            <person name="Weng S."/>
            <person name="Wong E.D."/>
            <person name="Lloyd P."/>
            <person name="Skrzypek M.S."/>
            <person name="Miyasato S.R."/>
            <person name="Simison M."/>
            <person name="Cherry J.M."/>
        </authorList>
    </citation>
    <scope>GENOME REANNOTATION</scope>
    <source>
        <strain>ATCC 204508 / S288c</strain>
    </source>
</reference>
<reference key="5">
    <citation type="journal article" date="1984" name="J. Bacteriol.">
        <title>Sequence of the Saccharomyces GAL region and its transcription in vivo.</title>
        <authorList>
            <person name="Citron B.A."/>
            <person name="Donelson J.E."/>
        </authorList>
    </citation>
    <scope>NUCLEOTIDE SEQUENCE [GENOMIC DNA] OF 1-185</scope>
    <source>
        <strain>Carlsbergensis</strain>
    </source>
</reference>
<reference key="6">
    <citation type="journal article" date="1983" name="Nucleic Acids Res.">
        <title>Nucleotide sequence of the transcriptional initiation region of the yeast GAL7 gene.</title>
        <authorList>
            <person name="Nogi Y."/>
            <person name="Fukasawa T."/>
        </authorList>
    </citation>
    <scope>NUCLEOTIDE SEQUENCE [GENOMIC DNA] OF 1-21</scope>
    <scope>PROTEIN SEQUENCE OF 2-8</scope>
</reference>
<reference key="7">
    <citation type="journal article" date="2009" name="Science">
        <title>Global analysis of Cdk1 substrate phosphorylation sites provides insights into evolution.</title>
        <authorList>
            <person name="Holt L.J."/>
            <person name="Tuch B.B."/>
            <person name="Villen J."/>
            <person name="Johnson A.D."/>
            <person name="Gygi S.P."/>
            <person name="Morgan D.O."/>
        </authorList>
    </citation>
    <scope>PHOSPHORYLATION [LARGE SCALE ANALYSIS] AT SER-27</scope>
    <scope>IDENTIFICATION BY MASS SPECTROMETRY [LARGE SCALE ANALYSIS]</scope>
</reference>
<reference key="8">
    <citation type="journal article" date="2012" name="Proc. Natl. Acad. Sci. U.S.A.">
        <title>N-terminal acetylome analyses and functional insights of the N-terminal acetyltransferase NatB.</title>
        <authorList>
            <person name="Van Damme P."/>
            <person name="Lasa M."/>
            <person name="Polevoda B."/>
            <person name="Gazquez C."/>
            <person name="Elosegui-Artola A."/>
            <person name="Kim D.S."/>
            <person name="De Juan-Pardo E."/>
            <person name="Demeyer K."/>
            <person name="Hole K."/>
            <person name="Larrea E."/>
            <person name="Timmerman E."/>
            <person name="Prieto J."/>
            <person name="Arnesen T."/>
            <person name="Sherman F."/>
            <person name="Gevaert K."/>
            <person name="Aldabe R."/>
        </authorList>
    </citation>
    <scope>IDENTIFICATION BY MASS SPECTROMETRY [LARGE SCALE ANALYSIS]</scope>
</reference>
<name>GAL7_YEAST</name>
<organism>
    <name type="scientific">Saccharomyces cerevisiae (strain ATCC 204508 / S288c)</name>
    <name type="common">Baker's yeast</name>
    <dbReference type="NCBI Taxonomy" id="559292"/>
    <lineage>
        <taxon>Eukaryota</taxon>
        <taxon>Fungi</taxon>
        <taxon>Dikarya</taxon>
        <taxon>Ascomycota</taxon>
        <taxon>Saccharomycotina</taxon>
        <taxon>Saccharomycetes</taxon>
        <taxon>Saccharomycetales</taxon>
        <taxon>Saccharomycetaceae</taxon>
        <taxon>Saccharomyces</taxon>
    </lineage>
</organism>